<evidence type="ECO:0000255" key="1">
    <source>
        <dbReference type="HAMAP-Rule" id="MF_00740"/>
    </source>
</evidence>
<sequence length="411" mass="45770">MPKKFGRIHLVVMDSVGIGAAPDADKFFNHDVETHEAINDVNSDTIGHISEIRGLDVPNLQKLGWGNIPRESPLKTVPKADKPAAYVTKLEEISKGKDTMTGHWEIMGLNIQTPFPTYPEGYPEDLLEKIEEFSGRKIIREANKPYSGTAVIEDFGPRQLETGELIIYTSADPVLQIAAHEDVISREELYKICEYVRSITLEGSGIMIGRIIARPYVGEAGNFERTDGRRDYALSPFAETVLEKLYKAGIDTYSVGKISDIFNTVGVKYDMGHNHNDMDGVDRLLKAMTKAEFTEGFSFTNLVDFDAKYGHRRDVEGYGKAIEDFDGRLPEIIDVMKEDDLLMITADHGNDPSYVGTDHTREYIPLVIFSKSLKDPKVLPVGHFADISATVAENFSVKKAQTGESFLDALV</sequence>
<organism>
    <name type="scientific">Lactococcus lactis subsp. lactis (strain IL1403)</name>
    <name type="common">Streptococcus lactis</name>
    <dbReference type="NCBI Taxonomy" id="272623"/>
    <lineage>
        <taxon>Bacteria</taxon>
        <taxon>Bacillati</taxon>
        <taxon>Bacillota</taxon>
        <taxon>Bacilli</taxon>
        <taxon>Lactobacillales</taxon>
        <taxon>Streptococcaceae</taxon>
        <taxon>Lactococcus</taxon>
    </lineage>
</organism>
<dbReference type="EC" id="5.4.2.7" evidence="1"/>
<dbReference type="EMBL" id="AE005176">
    <property type="protein sequence ID" value="AAK05027.1"/>
    <property type="molecule type" value="Genomic_DNA"/>
</dbReference>
<dbReference type="PIR" id="A86741">
    <property type="entry name" value="A86741"/>
</dbReference>
<dbReference type="RefSeq" id="NP_267085.1">
    <property type="nucleotide sequence ID" value="NC_002662.1"/>
</dbReference>
<dbReference type="RefSeq" id="WP_010905637.1">
    <property type="nucleotide sequence ID" value="NC_002662.1"/>
</dbReference>
<dbReference type="SMR" id="Q9CH12"/>
<dbReference type="PaxDb" id="272623-L154925"/>
<dbReference type="EnsemblBacteria" id="AAK05027">
    <property type="protein sequence ID" value="AAK05027"/>
    <property type="gene ID" value="L154925"/>
</dbReference>
<dbReference type="KEGG" id="lla:L154925"/>
<dbReference type="PATRIC" id="fig|272623.7.peg.994"/>
<dbReference type="eggNOG" id="COG1015">
    <property type="taxonomic scope" value="Bacteria"/>
</dbReference>
<dbReference type="HOGENOM" id="CLU_053861_0_0_9"/>
<dbReference type="OrthoDB" id="9769930at2"/>
<dbReference type="UniPathway" id="UPA00002">
    <property type="reaction ID" value="UER00467"/>
</dbReference>
<dbReference type="Proteomes" id="UP000002196">
    <property type="component" value="Chromosome"/>
</dbReference>
<dbReference type="GO" id="GO:0005829">
    <property type="term" value="C:cytosol"/>
    <property type="evidence" value="ECO:0007669"/>
    <property type="project" value="TreeGrafter"/>
</dbReference>
<dbReference type="GO" id="GO:0000287">
    <property type="term" value="F:magnesium ion binding"/>
    <property type="evidence" value="ECO:0007669"/>
    <property type="project" value="InterPro"/>
</dbReference>
<dbReference type="GO" id="GO:0030145">
    <property type="term" value="F:manganese ion binding"/>
    <property type="evidence" value="ECO:0007669"/>
    <property type="project" value="UniProtKB-UniRule"/>
</dbReference>
<dbReference type="GO" id="GO:0008973">
    <property type="term" value="F:phosphopentomutase activity"/>
    <property type="evidence" value="ECO:0007669"/>
    <property type="project" value="UniProtKB-UniRule"/>
</dbReference>
<dbReference type="GO" id="GO:0006018">
    <property type="term" value="P:2-deoxyribose 1-phosphate catabolic process"/>
    <property type="evidence" value="ECO:0007669"/>
    <property type="project" value="UniProtKB-UniRule"/>
</dbReference>
<dbReference type="GO" id="GO:0006015">
    <property type="term" value="P:5-phosphoribose 1-diphosphate biosynthetic process"/>
    <property type="evidence" value="ECO:0007669"/>
    <property type="project" value="UniProtKB-UniPathway"/>
</dbReference>
<dbReference type="GO" id="GO:0043094">
    <property type="term" value="P:metabolic compound salvage"/>
    <property type="evidence" value="ECO:0007669"/>
    <property type="project" value="InterPro"/>
</dbReference>
<dbReference type="GO" id="GO:0009117">
    <property type="term" value="P:nucleotide metabolic process"/>
    <property type="evidence" value="ECO:0007669"/>
    <property type="project" value="InterPro"/>
</dbReference>
<dbReference type="CDD" id="cd16009">
    <property type="entry name" value="PPM"/>
    <property type="match status" value="1"/>
</dbReference>
<dbReference type="FunFam" id="3.30.70.1250:FF:000001">
    <property type="entry name" value="Phosphopentomutase"/>
    <property type="match status" value="1"/>
</dbReference>
<dbReference type="Gene3D" id="3.40.720.10">
    <property type="entry name" value="Alkaline Phosphatase, subunit A"/>
    <property type="match status" value="1"/>
</dbReference>
<dbReference type="Gene3D" id="3.30.70.1250">
    <property type="entry name" value="Phosphopentomutase"/>
    <property type="match status" value="1"/>
</dbReference>
<dbReference type="HAMAP" id="MF_00740">
    <property type="entry name" value="Phosphopentomut"/>
    <property type="match status" value="1"/>
</dbReference>
<dbReference type="InterPro" id="IPR017850">
    <property type="entry name" value="Alkaline_phosphatase_core_sf"/>
</dbReference>
<dbReference type="InterPro" id="IPR010045">
    <property type="entry name" value="DeoB"/>
</dbReference>
<dbReference type="InterPro" id="IPR006124">
    <property type="entry name" value="Metalloenzyme"/>
</dbReference>
<dbReference type="InterPro" id="IPR024052">
    <property type="entry name" value="Phosphopentomutase_DeoB_cap_sf"/>
</dbReference>
<dbReference type="NCBIfam" id="TIGR01696">
    <property type="entry name" value="deoB"/>
    <property type="match status" value="1"/>
</dbReference>
<dbReference type="NCBIfam" id="NF003766">
    <property type="entry name" value="PRK05362.1"/>
    <property type="match status" value="1"/>
</dbReference>
<dbReference type="PANTHER" id="PTHR21110">
    <property type="entry name" value="PHOSPHOPENTOMUTASE"/>
    <property type="match status" value="1"/>
</dbReference>
<dbReference type="PANTHER" id="PTHR21110:SF0">
    <property type="entry name" value="PHOSPHOPENTOMUTASE"/>
    <property type="match status" value="1"/>
</dbReference>
<dbReference type="Pfam" id="PF01676">
    <property type="entry name" value="Metalloenzyme"/>
    <property type="match status" value="1"/>
</dbReference>
<dbReference type="PIRSF" id="PIRSF001491">
    <property type="entry name" value="Ppentomutase"/>
    <property type="match status" value="1"/>
</dbReference>
<dbReference type="SUPFAM" id="SSF53649">
    <property type="entry name" value="Alkaline phosphatase-like"/>
    <property type="match status" value="1"/>
</dbReference>
<dbReference type="SUPFAM" id="SSF143856">
    <property type="entry name" value="DeoB insert domain-like"/>
    <property type="match status" value="1"/>
</dbReference>
<gene>
    <name evidence="1" type="primary">deoB</name>
    <name type="ordered locus">LL0929</name>
    <name type="ORF">L154925</name>
</gene>
<feature type="chain" id="PRO_0000199825" description="Phosphopentomutase">
    <location>
        <begin position="1"/>
        <end position="411"/>
    </location>
</feature>
<feature type="binding site" evidence="1">
    <location>
        <position position="14"/>
    </location>
    <ligand>
        <name>Mn(2+)</name>
        <dbReference type="ChEBI" id="CHEBI:29035"/>
        <label>1</label>
    </ligand>
</feature>
<feature type="binding site" evidence="1">
    <location>
        <position position="306"/>
    </location>
    <ligand>
        <name>Mn(2+)</name>
        <dbReference type="ChEBI" id="CHEBI:29035"/>
        <label>2</label>
    </ligand>
</feature>
<feature type="binding site" evidence="1">
    <location>
        <position position="311"/>
    </location>
    <ligand>
        <name>Mn(2+)</name>
        <dbReference type="ChEBI" id="CHEBI:29035"/>
        <label>2</label>
    </ligand>
</feature>
<feature type="binding site" evidence="1">
    <location>
        <position position="347"/>
    </location>
    <ligand>
        <name>Mn(2+)</name>
        <dbReference type="ChEBI" id="CHEBI:29035"/>
        <label>1</label>
    </ligand>
</feature>
<feature type="binding site" evidence="1">
    <location>
        <position position="348"/>
    </location>
    <ligand>
        <name>Mn(2+)</name>
        <dbReference type="ChEBI" id="CHEBI:29035"/>
        <label>1</label>
    </ligand>
</feature>
<feature type="binding site" evidence="1">
    <location>
        <position position="359"/>
    </location>
    <ligand>
        <name>Mn(2+)</name>
        <dbReference type="ChEBI" id="CHEBI:29035"/>
        <label>2</label>
    </ligand>
</feature>
<name>DEOB_LACLA</name>
<comment type="function">
    <text evidence="1">Isomerase that catalyzes the conversion of deoxy-ribose 1-phosphate (dRib-1-P) and ribose 1-phosphate (Rib-1-P) to deoxy-ribose 5-phosphate (dRib-5-P) and ribose 5-phosphate (Rib-5-P), respectively.</text>
</comment>
<comment type="catalytic activity">
    <reaction evidence="1">
        <text>2-deoxy-alpha-D-ribose 1-phosphate = 2-deoxy-D-ribose 5-phosphate</text>
        <dbReference type="Rhea" id="RHEA:27658"/>
        <dbReference type="ChEBI" id="CHEBI:57259"/>
        <dbReference type="ChEBI" id="CHEBI:62877"/>
        <dbReference type="EC" id="5.4.2.7"/>
    </reaction>
</comment>
<comment type="catalytic activity">
    <reaction evidence="1">
        <text>alpha-D-ribose 1-phosphate = D-ribose 5-phosphate</text>
        <dbReference type="Rhea" id="RHEA:18793"/>
        <dbReference type="ChEBI" id="CHEBI:57720"/>
        <dbReference type="ChEBI" id="CHEBI:78346"/>
        <dbReference type="EC" id="5.4.2.7"/>
    </reaction>
</comment>
<comment type="cofactor">
    <cofactor evidence="1">
        <name>Mn(2+)</name>
        <dbReference type="ChEBI" id="CHEBI:29035"/>
    </cofactor>
    <text evidence="1">Binds 2 manganese ions.</text>
</comment>
<comment type="pathway">
    <text evidence="1">Carbohydrate degradation; 2-deoxy-D-ribose 1-phosphate degradation; D-glyceraldehyde 3-phosphate and acetaldehyde from 2-deoxy-alpha-D-ribose 1-phosphate: step 1/2.</text>
</comment>
<comment type="subcellular location">
    <subcellularLocation>
        <location evidence="1">Cytoplasm</location>
    </subcellularLocation>
</comment>
<comment type="similarity">
    <text evidence="1">Belongs to the phosphopentomutase family.</text>
</comment>
<keyword id="KW-0963">Cytoplasm</keyword>
<keyword id="KW-0413">Isomerase</keyword>
<keyword id="KW-0464">Manganese</keyword>
<keyword id="KW-0479">Metal-binding</keyword>
<keyword id="KW-1185">Reference proteome</keyword>
<accession>Q9CH12</accession>
<protein>
    <recommendedName>
        <fullName evidence="1">Phosphopentomutase</fullName>
        <ecNumber evidence="1">5.4.2.7</ecNumber>
    </recommendedName>
    <alternativeName>
        <fullName evidence="1">Phosphodeoxyribomutase</fullName>
    </alternativeName>
</protein>
<proteinExistence type="inferred from homology"/>
<reference key="1">
    <citation type="journal article" date="2001" name="Genome Res.">
        <title>The complete genome sequence of the lactic acid bacterium Lactococcus lactis ssp. lactis IL1403.</title>
        <authorList>
            <person name="Bolotin A."/>
            <person name="Wincker P."/>
            <person name="Mauger S."/>
            <person name="Jaillon O."/>
            <person name="Malarme K."/>
            <person name="Weissenbach J."/>
            <person name="Ehrlich S.D."/>
            <person name="Sorokin A."/>
        </authorList>
    </citation>
    <scope>NUCLEOTIDE SEQUENCE [LARGE SCALE GENOMIC DNA]</scope>
    <source>
        <strain>IL1403</strain>
    </source>
</reference>